<feature type="chain" id="PRO_1000002893" description="UDP-N-acetylenolpyruvoylglucosamine reductase">
    <location>
        <begin position="1"/>
        <end position="318"/>
    </location>
</feature>
<feature type="domain" description="FAD-binding PCMH-type" evidence="1">
    <location>
        <begin position="38"/>
        <end position="204"/>
    </location>
</feature>
<feature type="region of interest" description="Disordered" evidence="2">
    <location>
        <begin position="212"/>
        <end position="232"/>
    </location>
</feature>
<feature type="compositionally biased region" description="Basic and acidic residues" evidence="2">
    <location>
        <begin position="213"/>
        <end position="229"/>
    </location>
</feature>
<feature type="active site" evidence="1">
    <location>
        <position position="182"/>
    </location>
</feature>
<feature type="active site" description="Proton donor" evidence="1">
    <location>
        <position position="233"/>
    </location>
</feature>
<feature type="active site" evidence="1">
    <location>
        <position position="310"/>
    </location>
</feature>
<accession>Q04Y07</accession>
<evidence type="ECO:0000255" key="1">
    <source>
        <dbReference type="HAMAP-Rule" id="MF_00037"/>
    </source>
</evidence>
<evidence type="ECO:0000256" key="2">
    <source>
        <dbReference type="SAM" id="MobiDB-lite"/>
    </source>
</evidence>
<keyword id="KW-0131">Cell cycle</keyword>
<keyword id="KW-0132">Cell division</keyword>
<keyword id="KW-0133">Cell shape</keyword>
<keyword id="KW-0961">Cell wall biogenesis/degradation</keyword>
<keyword id="KW-0963">Cytoplasm</keyword>
<keyword id="KW-0274">FAD</keyword>
<keyword id="KW-0285">Flavoprotein</keyword>
<keyword id="KW-0521">NADP</keyword>
<keyword id="KW-0560">Oxidoreductase</keyword>
<keyword id="KW-0573">Peptidoglycan synthesis</keyword>
<organism>
    <name type="scientific">Leptospira borgpetersenii serovar Hardjo-bovis (strain L550)</name>
    <dbReference type="NCBI Taxonomy" id="355276"/>
    <lineage>
        <taxon>Bacteria</taxon>
        <taxon>Pseudomonadati</taxon>
        <taxon>Spirochaetota</taxon>
        <taxon>Spirochaetia</taxon>
        <taxon>Leptospirales</taxon>
        <taxon>Leptospiraceae</taxon>
        <taxon>Leptospira</taxon>
    </lineage>
</organism>
<proteinExistence type="inferred from homology"/>
<protein>
    <recommendedName>
        <fullName evidence="1">UDP-N-acetylenolpyruvoylglucosamine reductase</fullName>
        <ecNumber evidence="1">1.3.1.98</ecNumber>
    </recommendedName>
    <alternativeName>
        <fullName evidence="1">UDP-N-acetylmuramate dehydrogenase</fullName>
    </alternativeName>
</protein>
<sequence>MSLTLSELQIRTLKQTLESSKIPFKSEVRLDILSSFKIGGICPVVVEPENSNQVLETLFIFYKSEIPWKILGGGSNLLISDHPDNFVTLRLSGKFKEFEYLEGGKFRIGSATNTTPTFRQISQLGYTGAEFLSTIPGWTGGAVIQNAGCYGGELFDLIQTVEFLRNNEIFVRSPSEIKHGYRFTEFLNEKDSIILGIEILLKEGNLEEIQTSLKDKRDRRNSSQPENKKSAGSVFKNPKIFLENGKEIKAWELIDQAGLRGQIKGGAQISPEHCNFIVNVGAATAADVNYLVELILDKVFQTTGIRLNREIEYFGDIP</sequence>
<gene>
    <name evidence="1" type="primary">murB</name>
    <name type="ordered locus">LBL_2690</name>
</gene>
<dbReference type="EC" id="1.3.1.98" evidence="1"/>
<dbReference type="EMBL" id="CP000348">
    <property type="protein sequence ID" value="ABJ80038.1"/>
    <property type="molecule type" value="Genomic_DNA"/>
</dbReference>
<dbReference type="RefSeq" id="WP_011670976.1">
    <property type="nucleotide sequence ID" value="NC_008508.1"/>
</dbReference>
<dbReference type="SMR" id="Q04Y07"/>
<dbReference type="KEGG" id="lbl:LBL_2690"/>
<dbReference type="HOGENOM" id="CLU_035304_1_1_12"/>
<dbReference type="UniPathway" id="UPA00219"/>
<dbReference type="GO" id="GO:0005829">
    <property type="term" value="C:cytosol"/>
    <property type="evidence" value="ECO:0007669"/>
    <property type="project" value="TreeGrafter"/>
</dbReference>
<dbReference type="GO" id="GO:0071949">
    <property type="term" value="F:FAD binding"/>
    <property type="evidence" value="ECO:0007669"/>
    <property type="project" value="InterPro"/>
</dbReference>
<dbReference type="GO" id="GO:0008762">
    <property type="term" value="F:UDP-N-acetylmuramate dehydrogenase activity"/>
    <property type="evidence" value="ECO:0007669"/>
    <property type="project" value="UniProtKB-UniRule"/>
</dbReference>
<dbReference type="GO" id="GO:0051301">
    <property type="term" value="P:cell division"/>
    <property type="evidence" value="ECO:0007669"/>
    <property type="project" value="UniProtKB-KW"/>
</dbReference>
<dbReference type="GO" id="GO:0071555">
    <property type="term" value="P:cell wall organization"/>
    <property type="evidence" value="ECO:0007669"/>
    <property type="project" value="UniProtKB-KW"/>
</dbReference>
<dbReference type="GO" id="GO:0009252">
    <property type="term" value="P:peptidoglycan biosynthetic process"/>
    <property type="evidence" value="ECO:0007669"/>
    <property type="project" value="UniProtKB-UniRule"/>
</dbReference>
<dbReference type="GO" id="GO:0008360">
    <property type="term" value="P:regulation of cell shape"/>
    <property type="evidence" value="ECO:0007669"/>
    <property type="project" value="UniProtKB-KW"/>
</dbReference>
<dbReference type="Gene3D" id="3.30.465.10">
    <property type="match status" value="1"/>
</dbReference>
<dbReference type="Gene3D" id="3.90.78.10">
    <property type="entry name" value="UDP-N-acetylenolpyruvoylglucosamine reductase, C-terminal domain"/>
    <property type="match status" value="1"/>
</dbReference>
<dbReference type="Gene3D" id="3.30.43.10">
    <property type="entry name" value="Uridine Diphospho-n-acetylenolpyruvylglucosamine Reductase, domain 2"/>
    <property type="match status" value="1"/>
</dbReference>
<dbReference type="HAMAP" id="MF_00037">
    <property type="entry name" value="MurB"/>
    <property type="match status" value="1"/>
</dbReference>
<dbReference type="InterPro" id="IPR016166">
    <property type="entry name" value="FAD-bd_PCMH"/>
</dbReference>
<dbReference type="InterPro" id="IPR036318">
    <property type="entry name" value="FAD-bd_PCMH-like_sf"/>
</dbReference>
<dbReference type="InterPro" id="IPR016167">
    <property type="entry name" value="FAD-bd_PCMH_sub1"/>
</dbReference>
<dbReference type="InterPro" id="IPR016169">
    <property type="entry name" value="FAD-bd_PCMH_sub2"/>
</dbReference>
<dbReference type="InterPro" id="IPR003170">
    <property type="entry name" value="MurB"/>
</dbReference>
<dbReference type="InterPro" id="IPR011601">
    <property type="entry name" value="MurB_C"/>
</dbReference>
<dbReference type="InterPro" id="IPR036635">
    <property type="entry name" value="MurB_C_sf"/>
</dbReference>
<dbReference type="InterPro" id="IPR006094">
    <property type="entry name" value="Oxid_FAD_bind_N"/>
</dbReference>
<dbReference type="NCBIfam" id="TIGR00179">
    <property type="entry name" value="murB"/>
    <property type="match status" value="1"/>
</dbReference>
<dbReference type="NCBIfam" id="NF010480">
    <property type="entry name" value="PRK13905.1"/>
    <property type="match status" value="1"/>
</dbReference>
<dbReference type="PANTHER" id="PTHR21071">
    <property type="entry name" value="UDP-N-ACETYLENOLPYRUVOYLGLUCOSAMINE REDUCTASE"/>
    <property type="match status" value="1"/>
</dbReference>
<dbReference type="PANTHER" id="PTHR21071:SF4">
    <property type="entry name" value="UDP-N-ACETYLENOLPYRUVOYLGLUCOSAMINE REDUCTASE"/>
    <property type="match status" value="1"/>
</dbReference>
<dbReference type="Pfam" id="PF01565">
    <property type="entry name" value="FAD_binding_4"/>
    <property type="match status" value="1"/>
</dbReference>
<dbReference type="Pfam" id="PF02873">
    <property type="entry name" value="MurB_C"/>
    <property type="match status" value="1"/>
</dbReference>
<dbReference type="SUPFAM" id="SSF56176">
    <property type="entry name" value="FAD-binding/transporter-associated domain-like"/>
    <property type="match status" value="1"/>
</dbReference>
<dbReference type="SUPFAM" id="SSF56194">
    <property type="entry name" value="Uridine diphospho-N-Acetylenolpyruvylglucosamine reductase, MurB, C-terminal domain"/>
    <property type="match status" value="1"/>
</dbReference>
<dbReference type="PROSITE" id="PS51387">
    <property type="entry name" value="FAD_PCMH"/>
    <property type="match status" value="1"/>
</dbReference>
<reference key="1">
    <citation type="journal article" date="2006" name="Proc. Natl. Acad. Sci. U.S.A.">
        <title>Genome reduction in Leptospira borgpetersenii reflects limited transmission potential.</title>
        <authorList>
            <person name="Bulach D.M."/>
            <person name="Zuerner R.L."/>
            <person name="Wilson P."/>
            <person name="Seemann T."/>
            <person name="McGrath A."/>
            <person name="Cullen P.A."/>
            <person name="Davis J."/>
            <person name="Johnson M."/>
            <person name="Kuczek E."/>
            <person name="Alt D.P."/>
            <person name="Peterson-Burch B."/>
            <person name="Coppel R.L."/>
            <person name="Rood J.I."/>
            <person name="Davies J.K."/>
            <person name="Adler B."/>
        </authorList>
    </citation>
    <scope>NUCLEOTIDE SEQUENCE [LARGE SCALE GENOMIC DNA]</scope>
    <source>
        <strain>L550</strain>
    </source>
</reference>
<comment type="function">
    <text evidence="1">Cell wall formation.</text>
</comment>
<comment type="catalytic activity">
    <reaction evidence="1">
        <text>UDP-N-acetyl-alpha-D-muramate + NADP(+) = UDP-N-acetyl-3-O-(1-carboxyvinyl)-alpha-D-glucosamine + NADPH + H(+)</text>
        <dbReference type="Rhea" id="RHEA:12248"/>
        <dbReference type="ChEBI" id="CHEBI:15378"/>
        <dbReference type="ChEBI" id="CHEBI:57783"/>
        <dbReference type="ChEBI" id="CHEBI:58349"/>
        <dbReference type="ChEBI" id="CHEBI:68483"/>
        <dbReference type="ChEBI" id="CHEBI:70757"/>
        <dbReference type="EC" id="1.3.1.98"/>
    </reaction>
</comment>
<comment type="cofactor">
    <cofactor evidence="1">
        <name>FAD</name>
        <dbReference type="ChEBI" id="CHEBI:57692"/>
    </cofactor>
</comment>
<comment type="pathway">
    <text evidence="1">Cell wall biogenesis; peptidoglycan biosynthesis.</text>
</comment>
<comment type="subcellular location">
    <subcellularLocation>
        <location evidence="1">Cytoplasm</location>
    </subcellularLocation>
</comment>
<comment type="similarity">
    <text evidence="1">Belongs to the MurB family.</text>
</comment>
<name>MURB_LEPBL</name>